<gene>
    <name evidence="3" type="primary">Hm13</name>
    <name evidence="14" type="synonym">H13</name>
    <name type="synonym">Psl3</name>
    <name evidence="10" type="synonym">SPP</name>
</gene>
<name>SPP_MOUSE</name>
<keyword id="KW-0002">3D-structure</keyword>
<keyword id="KW-0025">Alternative splicing</keyword>
<keyword id="KW-1003">Cell membrane</keyword>
<keyword id="KW-0256">Endoplasmic reticulum</keyword>
<keyword id="KW-0325">Glycoprotein</keyword>
<keyword id="KW-0378">Hydrolase</keyword>
<keyword id="KW-0472">Membrane</keyword>
<keyword id="KW-0597">Phosphoprotein</keyword>
<keyword id="KW-0645">Protease</keyword>
<keyword id="KW-1185">Reference proteome</keyword>
<keyword id="KW-0812">Transmembrane</keyword>
<keyword id="KW-1133">Transmembrane helix</keyword>
<protein>
    <recommendedName>
        <fullName evidence="10">Signal peptide peptidase</fullName>
        <ecNumber evidence="3">3.4.23.-</ecNumber>
    </recommendedName>
    <alternativeName>
        <fullName>Minor histocompatibility antigen H13</fullName>
    </alternativeName>
    <alternativeName>
        <fullName>Presenilin-like protein 3</fullName>
    </alternativeName>
    <alternativeName>
        <fullName>Signal peptide peptidase-like 1</fullName>
    </alternativeName>
</protein>
<sequence>MDSAVSDPHNGSAEAGTPANGTTRPPSTPEGIALAYGSLLLMALLPIFFGALRSVRCARGKSSSDMPETITSRDAARFPIIASCTLLGLYLFFKIFSQEYINLLLSMYFFVLGILALSHTISPFMNKFFPANFPNRQYQLLFTQGSGENKEEIINYEFDTKDLVCLGLSSVVGVWYLLRKHWIANNLFGLAFSLNGVELLHLNNVSTGCILLGGLFIYDIFWVFGTNVMVTVAKSFEAPIKLVFPQDLLEKGLEADNFAMLGLGDIVIPGIFIALLLRFDISLKKNTHTYFYTSFAAYIFGLGLTIFIMHIFKHAQPALLYLVPACIGFPVLVALAKGEVAEMFSYEESNPKDPAAETESKEESTEASASKRLEKKEK</sequence>
<feature type="chain" id="PRO_0000073908" description="Signal peptide peptidase">
    <location>
        <begin position="1"/>
        <end position="378"/>
    </location>
</feature>
<feature type="topological domain" description="Lumenal" evidence="3">
    <location>
        <begin position="1"/>
        <end position="31"/>
    </location>
</feature>
<feature type="transmembrane region" description="Helical" evidence="4">
    <location>
        <begin position="32"/>
        <end position="52"/>
    </location>
</feature>
<feature type="topological domain" description="Cytoplasmic" evidence="4">
    <location>
        <begin position="53"/>
        <end position="77"/>
    </location>
</feature>
<feature type="transmembrane region" description="Helical" evidence="4">
    <location>
        <begin position="78"/>
        <end position="98"/>
    </location>
</feature>
<feature type="topological domain" description="Lumenal" evidence="4">
    <location>
        <begin position="99"/>
        <end position="100"/>
    </location>
</feature>
<feature type="transmembrane region" description="Helical" evidence="4">
    <location>
        <begin position="101"/>
        <end position="121"/>
    </location>
</feature>
<feature type="topological domain" description="Cytoplasmic" evidence="4">
    <location>
        <begin position="122"/>
        <end position="157"/>
    </location>
</feature>
<feature type="transmembrane region" description="Helical" evidence="4">
    <location>
        <begin position="158"/>
        <end position="178"/>
    </location>
</feature>
<feature type="topological domain" description="Lumenal" evidence="4">
    <location>
        <begin position="179"/>
        <end position="181"/>
    </location>
</feature>
<feature type="transmembrane region" description="Helical" evidence="4">
    <location>
        <begin position="182"/>
        <end position="202"/>
    </location>
</feature>
<feature type="topological domain" description="Cytoplasmic" evidence="4">
    <location>
        <begin position="203"/>
        <end position="209"/>
    </location>
</feature>
<feature type="transmembrane region" description="Helical" evidence="4">
    <location>
        <begin position="210"/>
        <end position="230"/>
    </location>
</feature>
<feature type="topological domain" description="Lumenal" evidence="3">
    <location>
        <begin position="231"/>
        <end position="256"/>
    </location>
</feature>
<feature type="transmembrane region" description="Helical" evidence="4">
    <location>
        <begin position="257"/>
        <end position="277"/>
    </location>
</feature>
<feature type="topological domain" description="Cytoplasmic" evidence="4">
    <location>
        <begin position="278"/>
        <end position="290"/>
    </location>
</feature>
<feature type="transmembrane region" description="Helical" evidence="4">
    <location>
        <begin position="291"/>
        <end position="311"/>
    </location>
</feature>
<feature type="topological domain" description="Lumenal" evidence="4">
    <location>
        <begin position="312"/>
        <end position="314"/>
    </location>
</feature>
<feature type="transmembrane region" description="Helical" evidence="4">
    <location>
        <begin position="315"/>
        <end position="335"/>
    </location>
</feature>
<feature type="topological domain" description="Cytoplasmic" evidence="3">
    <location>
        <begin position="336"/>
        <end position="378"/>
    </location>
</feature>
<feature type="region of interest" description="Disordered" evidence="5">
    <location>
        <begin position="1"/>
        <end position="27"/>
    </location>
</feature>
<feature type="region of interest" description="Disordered" evidence="5">
    <location>
        <begin position="346"/>
        <end position="378"/>
    </location>
</feature>
<feature type="short sequence motif" description="PAL">
    <location>
        <begin position="317"/>
        <end position="319"/>
    </location>
</feature>
<feature type="compositionally biased region" description="Basic and acidic residues" evidence="5">
    <location>
        <begin position="349"/>
        <end position="378"/>
    </location>
</feature>
<feature type="active site" evidence="2">
    <location>
        <position position="219"/>
    </location>
</feature>
<feature type="active site" evidence="2">
    <location>
        <position position="265"/>
    </location>
</feature>
<feature type="modified residue" description="Phosphoserine" evidence="3">
    <location>
        <position position="368"/>
    </location>
</feature>
<feature type="glycosylation site" description="N-linked (GlcNAc...) asparagine" evidence="4">
    <location>
        <position position="10"/>
    </location>
</feature>
<feature type="glycosylation site" description="N-linked (GlcNAc...) asparagine" evidence="4">
    <location>
        <position position="20"/>
    </location>
</feature>
<feature type="splice variant" id="VSP_005201" description="In isoform 3." evidence="13">
    <original>HTISPFMNKFFPANFPNRQYQLLFTQGSGENKE</original>
    <variation>DDADSHALLQALTGWGWGGSLTLGSELIWPLCP</variation>
    <location>
        <begin position="119"/>
        <end position="151"/>
    </location>
</feature>
<feature type="splice variant" id="VSP_005199" description="In isoform 2." evidence="11">
    <original>SPFMNKFFPANFPNRQYQLLFTQGSGENKEEIINYEFDTKDLVCLGLSSVVG</original>
    <variation>RSEGISRQPLKLLSQEPVQGLGWEHGLLCHSEPGLNPGCKIQGNLPSRQHYT</variation>
    <location>
        <begin position="122"/>
        <end position="173"/>
    </location>
</feature>
<feature type="splice variant" id="VSP_005200" description="In isoform 2." evidence="11">
    <location>
        <begin position="174"/>
        <end position="378"/>
    </location>
</feature>
<feature type="splice variant" id="VSP_005202" description="In isoform 3." evidence="13">
    <original>HWIANNLFGLAFS</original>
    <variation>VSQSLRRRGGWAD</variation>
    <location>
        <begin position="181"/>
        <end position="193"/>
    </location>
</feature>
<feature type="splice variant" id="VSP_039805" description="In isoform 4." evidence="12">
    <original>ESNPKDPAAETESKEESTEASASKRLEKKEK</original>
    <variation>SSAVILPHTPRLTHFPTVSGSPASLADSMQQKLAGPRRRRPQNPSAM</variation>
    <location>
        <begin position="348"/>
        <end position="378"/>
    </location>
</feature>
<feature type="sequence conflict" description="In Ref. 2; ABA56162." evidence="13" ref="2">
    <original>M</original>
    <variation>T</variation>
    <location>
        <position position="42"/>
    </location>
</feature>
<feature type="sequence conflict" description="In Ref. 3; CAC87793 and 4; AAM22075." evidence="13" ref="3 4">
    <original>R</original>
    <variation>P</variation>
    <location>
        <position position="53"/>
    </location>
</feature>
<feature type="sequence conflict" description="In Ref. 4; AAM22077." evidence="13" ref="4">
    <original>R</original>
    <variation>Q</variation>
    <location>
        <position position="73"/>
    </location>
</feature>
<feature type="sequence conflict" description="In Ref. 1; AAN77098, 4; AAM22077 and 5; BAE34875." evidence="13" ref="1 4 5">
    <original>V</original>
    <variation>I</variation>
    <location>
        <position position="172"/>
    </location>
</feature>
<feature type="sequence conflict" description="In Ref. 5; BAC25752." evidence="13" ref="5">
    <original>S</original>
    <variation>E</variation>
    <location>
        <position position="294"/>
    </location>
</feature>
<feature type="sequence conflict" description="In Ref. 1; AAN77098, 3; CAC87793, 4; AAM22075 and 5; BAE34875." evidence="13" ref="1 3 4 5">
    <original>E</original>
    <variation>V</variation>
    <location>
        <position position="357"/>
    </location>
</feature>
<organism>
    <name type="scientific">Mus musculus</name>
    <name type="common">Mouse</name>
    <dbReference type="NCBI Taxonomy" id="10090"/>
    <lineage>
        <taxon>Eukaryota</taxon>
        <taxon>Metazoa</taxon>
        <taxon>Chordata</taxon>
        <taxon>Craniata</taxon>
        <taxon>Vertebrata</taxon>
        <taxon>Euteleostomi</taxon>
        <taxon>Mammalia</taxon>
        <taxon>Eutheria</taxon>
        <taxon>Euarchontoglires</taxon>
        <taxon>Glires</taxon>
        <taxon>Rodentia</taxon>
        <taxon>Myomorpha</taxon>
        <taxon>Muroidea</taxon>
        <taxon>Muridae</taxon>
        <taxon>Murinae</taxon>
        <taxon>Mus</taxon>
        <taxon>Mus</taxon>
    </lineage>
</organism>
<comment type="function">
    <text evidence="3 9">Catalyzes intramembrane proteolysis of signal peptides that have been removed from precursors of secretory and membrane proteins, resulting in the release of the fragment from the ER membrane into the cytoplasm (By similarity). Required to generate lymphocyte cell surface (HLA-E) epitopes derived from MHC class I signal peptides. Involved in the intramembrane cleavage of the integral membrane protein PSEN1. Cleaves the integral membrane protein XBP1 isoform 1 in a DERL1/RNF139-dependent manner (By similarity). May play a role in graft rejection (PubMed:9354467).</text>
</comment>
<comment type="subunit">
    <text evidence="3 8">Monomer. Homodimer (By similarity). Interacts with RNF139 (PubMed:19720873). Interacts with DERL1 and XBP1 isoform 1 (By similarity).</text>
</comment>
<comment type="subcellular location">
    <subcellularLocation>
        <location evidence="6 7">Endoplasmic reticulum membrane</location>
        <topology evidence="13">Multi-pass membrane protein</topology>
    </subcellularLocation>
    <subcellularLocation>
        <location evidence="3">Membrane</location>
        <topology evidence="3">Multi-pass membrane protein</topology>
        <orientation evidence="3">Lumenal side</orientation>
    </subcellularLocation>
</comment>
<comment type="subcellular location">
    <molecule>Isoform 4</molecule>
    <subcellularLocation>
        <location evidence="7">Cell membrane</location>
        <topology evidence="13">Multi-pass membrane protein</topology>
    </subcellularLocation>
</comment>
<comment type="alternative products">
    <event type="alternative splicing"/>
    <isoform>
        <id>Q9D8V0-1</id>
        <name>1</name>
        <name>SPP-alpha</name>
        <sequence type="displayed"/>
    </isoform>
    <isoform>
        <id>Q9D8V0-2</id>
        <name>2</name>
        <sequence type="described" ref="VSP_005199 VSP_005200"/>
    </isoform>
    <isoform>
        <id>Q9D8V0-3</id>
        <name>3</name>
        <sequence type="described" ref="VSP_005201 VSP_005202"/>
    </isoform>
    <isoform>
        <id>Q9D8V0-4</id>
        <name>4</name>
        <name>SPP-beta</name>
        <sequence type="described" ref="VSP_039805"/>
    </isoform>
</comment>
<comment type="tissue specificity">
    <text evidence="6 7">Widely expressed with highest levels in liver and kidney. In the brain, expressed predominantly in hippocampus, amygdala, piriform cortex, choroid plexus and arcuate nucleus of the hypothalamic area. Isoform 1 is more strongly expressed than isoform 4 in most tissues except brain and skeletal muscle where isoform 4 is the dominant isoform and in testis where isoform 1 and isoform 4 are expressed at similar levels. In the brain, isoform 4 is not detected in the choroid plexus.</text>
</comment>
<comment type="developmental stage">
    <text evidence="6">In the embryo, expression starts at day 6.5.</text>
</comment>
<comment type="domain">
    <text evidence="1 3">The first transmembrane domain may act as a type I signal anchor. The PAL motif is required for normal active site conformation.</text>
</comment>
<comment type="similarity">
    <text evidence="13">Belongs to the peptidase A22B family.</text>
</comment>
<reference key="1">
    <citation type="journal article" date="2003" name="Gene Expr. Patterns">
        <title>Expression of the presenilin-like signal peptide peptidase (SPP) in mouse adult brain and during development.</title>
        <authorList>
            <person name="Urny J."/>
            <person name="Hermans-Borgmeyer I."/>
            <person name="Gercken G."/>
            <person name="Chica Schaller H."/>
        </authorList>
    </citation>
    <scope>NUCLEOTIDE SEQUENCE [MRNA] (ISOFORM 1)</scope>
    <scope>SUBCELLULAR LOCATION</scope>
    <scope>TISSUE SPECIFICITY</scope>
    <scope>DEVELOPMENTAL STAGE</scope>
    <source>
        <tissue>Placenta</tissue>
    </source>
</reference>
<reference key="2">
    <citation type="journal article" date="2006" name="Biochim. Biophys. Acta">
        <title>Cell-surface expression of a new splice variant of the mouse signal peptide peptidase.</title>
        <authorList>
            <person name="Urny J."/>
            <person name="Hermans-Borgmeyer I."/>
            <person name="Schaller H.C."/>
        </authorList>
    </citation>
    <scope>NUCLEOTIDE SEQUENCE [MRNA] (ISOFORM 4)</scope>
    <scope>SUBCELLULAR LOCATION</scope>
    <scope>TISSUE SPECIFICITY</scope>
</reference>
<reference key="3">
    <citation type="submission" date="2001-09" db="EMBL/GenBank/DDBJ databases">
        <title>Characterization of a new protein family with homology to presenilins.</title>
        <authorList>
            <person name="Irmler M."/>
            <person name="Tomiuk S."/>
            <person name="Korner M.R."/>
            <person name="Hofmann K."/>
            <person name="Conradt M."/>
        </authorList>
    </citation>
    <scope>NUCLEOTIDE SEQUENCE [MRNA] (ISOFORM 1)</scope>
    <source>
        <strain>BALB/cJ</strain>
    </source>
</reference>
<reference key="4">
    <citation type="submission" date="2002-02" db="EMBL/GenBank/DDBJ databases">
        <title>Genomic analysis of the H13 minor histocompatibility antigen gene.</title>
        <authorList>
            <person name="Brown A.C."/>
            <person name="Roopenian D.C."/>
        </authorList>
    </citation>
    <scope>NUCLEOTIDE SEQUENCE [MRNA] (ISOFORM 1)</scope>
    <scope>NUCLEOTIDE SEQUENCE [GENOMIC DNA] OF 63-344</scope>
    <source>
        <strain>129P3/J</strain>
    </source>
</reference>
<reference key="5">
    <citation type="journal article" date="2005" name="Science">
        <title>The transcriptional landscape of the mammalian genome.</title>
        <authorList>
            <person name="Carninci P."/>
            <person name="Kasukawa T."/>
            <person name="Katayama S."/>
            <person name="Gough J."/>
            <person name="Frith M.C."/>
            <person name="Maeda N."/>
            <person name="Oyama R."/>
            <person name="Ravasi T."/>
            <person name="Lenhard B."/>
            <person name="Wells C."/>
            <person name="Kodzius R."/>
            <person name="Shimokawa K."/>
            <person name="Bajic V.B."/>
            <person name="Brenner S.E."/>
            <person name="Batalov S."/>
            <person name="Forrest A.R."/>
            <person name="Zavolan M."/>
            <person name="Davis M.J."/>
            <person name="Wilming L.G."/>
            <person name="Aidinis V."/>
            <person name="Allen J.E."/>
            <person name="Ambesi-Impiombato A."/>
            <person name="Apweiler R."/>
            <person name="Aturaliya R.N."/>
            <person name="Bailey T.L."/>
            <person name="Bansal M."/>
            <person name="Baxter L."/>
            <person name="Beisel K.W."/>
            <person name="Bersano T."/>
            <person name="Bono H."/>
            <person name="Chalk A.M."/>
            <person name="Chiu K.P."/>
            <person name="Choudhary V."/>
            <person name="Christoffels A."/>
            <person name="Clutterbuck D.R."/>
            <person name="Crowe M.L."/>
            <person name="Dalla E."/>
            <person name="Dalrymple B.P."/>
            <person name="de Bono B."/>
            <person name="Della Gatta G."/>
            <person name="di Bernardo D."/>
            <person name="Down T."/>
            <person name="Engstrom P."/>
            <person name="Fagiolini M."/>
            <person name="Faulkner G."/>
            <person name="Fletcher C.F."/>
            <person name="Fukushima T."/>
            <person name="Furuno M."/>
            <person name="Futaki S."/>
            <person name="Gariboldi M."/>
            <person name="Georgii-Hemming P."/>
            <person name="Gingeras T.R."/>
            <person name="Gojobori T."/>
            <person name="Green R.E."/>
            <person name="Gustincich S."/>
            <person name="Harbers M."/>
            <person name="Hayashi Y."/>
            <person name="Hensch T.K."/>
            <person name="Hirokawa N."/>
            <person name="Hill D."/>
            <person name="Huminiecki L."/>
            <person name="Iacono M."/>
            <person name="Ikeo K."/>
            <person name="Iwama A."/>
            <person name="Ishikawa T."/>
            <person name="Jakt M."/>
            <person name="Kanapin A."/>
            <person name="Katoh M."/>
            <person name="Kawasawa Y."/>
            <person name="Kelso J."/>
            <person name="Kitamura H."/>
            <person name="Kitano H."/>
            <person name="Kollias G."/>
            <person name="Krishnan S.P."/>
            <person name="Kruger A."/>
            <person name="Kummerfeld S.K."/>
            <person name="Kurochkin I.V."/>
            <person name="Lareau L.F."/>
            <person name="Lazarevic D."/>
            <person name="Lipovich L."/>
            <person name="Liu J."/>
            <person name="Liuni S."/>
            <person name="McWilliam S."/>
            <person name="Madan Babu M."/>
            <person name="Madera M."/>
            <person name="Marchionni L."/>
            <person name="Matsuda H."/>
            <person name="Matsuzawa S."/>
            <person name="Miki H."/>
            <person name="Mignone F."/>
            <person name="Miyake S."/>
            <person name="Morris K."/>
            <person name="Mottagui-Tabar S."/>
            <person name="Mulder N."/>
            <person name="Nakano N."/>
            <person name="Nakauchi H."/>
            <person name="Ng P."/>
            <person name="Nilsson R."/>
            <person name="Nishiguchi S."/>
            <person name="Nishikawa S."/>
            <person name="Nori F."/>
            <person name="Ohara O."/>
            <person name="Okazaki Y."/>
            <person name="Orlando V."/>
            <person name="Pang K.C."/>
            <person name="Pavan W.J."/>
            <person name="Pavesi G."/>
            <person name="Pesole G."/>
            <person name="Petrovsky N."/>
            <person name="Piazza S."/>
            <person name="Reed J."/>
            <person name="Reid J.F."/>
            <person name="Ring B.Z."/>
            <person name="Ringwald M."/>
            <person name="Rost B."/>
            <person name="Ruan Y."/>
            <person name="Salzberg S.L."/>
            <person name="Sandelin A."/>
            <person name="Schneider C."/>
            <person name="Schoenbach C."/>
            <person name="Sekiguchi K."/>
            <person name="Semple C.A."/>
            <person name="Seno S."/>
            <person name="Sessa L."/>
            <person name="Sheng Y."/>
            <person name="Shibata Y."/>
            <person name="Shimada H."/>
            <person name="Shimada K."/>
            <person name="Silva D."/>
            <person name="Sinclair B."/>
            <person name="Sperling S."/>
            <person name="Stupka E."/>
            <person name="Sugiura K."/>
            <person name="Sultana R."/>
            <person name="Takenaka Y."/>
            <person name="Taki K."/>
            <person name="Tammoja K."/>
            <person name="Tan S.L."/>
            <person name="Tang S."/>
            <person name="Taylor M.S."/>
            <person name="Tegner J."/>
            <person name="Teichmann S.A."/>
            <person name="Ueda H.R."/>
            <person name="van Nimwegen E."/>
            <person name="Verardo R."/>
            <person name="Wei C.L."/>
            <person name="Yagi K."/>
            <person name="Yamanishi H."/>
            <person name="Zabarovsky E."/>
            <person name="Zhu S."/>
            <person name="Zimmer A."/>
            <person name="Hide W."/>
            <person name="Bult C."/>
            <person name="Grimmond S.M."/>
            <person name="Teasdale R.D."/>
            <person name="Liu E.T."/>
            <person name="Brusic V."/>
            <person name="Quackenbush J."/>
            <person name="Wahlestedt C."/>
            <person name="Mattick J.S."/>
            <person name="Hume D.A."/>
            <person name="Kai C."/>
            <person name="Sasaki D."/>
            <person name="Tomaru Y."/>
            <person name="Fukuda S."/>
            <person name="Kanamori-Katayama M."/>
            <person name="Suzuki M."/>
            <person name="Aoki J."/>
            <person name="Arakawa T."/>
            <person name="Iida J."/>
            <person name="Imamura K."/>
            <person name="Itoh M."/>
            <person name="Kato T."/>
            <person name="Kawaji H."/>
            <person name="Kawagashira N."/>
            <person name="Kawashima T."/>
            <person name="Kojima M."/>
            <person name="Kondo S."/>
            <person name="Konno H."/>
            <person name="Nakano K."/>
            <person name="Ninomiya N."/>
            <person name="Nishio T."/>
            <person name="Okada M."/>
            <person name="Plessy C."/>
            <person name="Shibata K."/>
            <person name="Shiraki T."/>
            <person name="Suzuki S."/>
            <person name="Tagami M."/>
            <person name="Waki K."/>
            <person name="Watahiki A."/>
            <person name="Okamura-Oho Y."/>
            <person name="Suzuki H."/>
            <person name="Kawai J."/>
            <person name="Hayashizaki Y."/>
        </authorList>
    </citation>
    <scope>NUCLEOTIDE SEQUENCE [LARGE SCALE MRNA] (ISOFORMS 1 AND 2)</scope>
    <source>
        <strain>C57BL/6J</strain>
        <tissue>Adipose tissue</tissue>
        <tissue>Cerebellum</tissue>
        <tissue>Embryo</tissue>
        <tissue>Lung</tissue>
        <tissue>Ovary</tissue>
        <tissue>Pancreas</tissue>
        <tissue>Thymus</tissue>
        <tissue>Uterus</tissue>
    </source>
</reference>
<reference key="6">
    <citation type="journal article" date="2009" name="PLoS Biol.">
        <title>Lineage-specific biology revealed by a finished genome assembly of the mouse.</title>
        <authorList>
            <person name="Church D.M."/>
            <person name="Goodstadt L."/>
            <person name="Hillier L.W."/>
            <person name="Zody M.C."/>
            <person name="Goldstein S."/>
            <person name="She X."/>
            <person name="Bult C.J."/>
            <person name="Agarwala R."/>
            <person name="Cherry J.L."/>
            <person name="DiCuccio M."/>
            <person name="Hlavina W."/>
            <person name="Kapustin Y."/>
            <person name="Meric P."/>
            <person name="Maglott D."/>
            <person name="Birtle Z."/>
            <person name="Marques A.C."/>
            <person name="Graves T."/>
            <person name="Zhou S."/>
            <person name="Teague B."/>
            <person name="Potamousis K."/>
            <person name="Churas C."/>
            <person name="Place M."/>
            <person name="Herschleb J."/>
            <person name="Runnheim R."/>
            <person name="Forrest D."/>
            <person name="Amos-Landgraf J."/>
            <person name="Schwartz D.C."/>
            <person name="Cheng Z."/>
            <person name="Lindblad-Toh K."/>
            <person name="Eichler E.E."/>
            <person name="Ponting C.P."/>
        </authorList>
    </citation>
    <scope>NUCLEOTIDE SEQUENCE [LARGE SCALE GENOMIC DNA]</scope>
    <source>
        <strain>C57BL/6J</strain>
    </source>
</reference>
<reference key="7">
    <citation type="submission" date="2005-07" db="EMBL/GenBank/DDBJ databases">
        <authorList>
            <person name="Mural R.J."/>
            <person name="Adams M.D."/>
            <person name="Myers E.W."/>
            <person name="Smith H.O."/>
            <person name="Venter J.C."/>
        </authorList>
    </citation>
    <scope>NUCLEOTIDE SEQUENCE [LARGE SCALE GENOMIC DNA]</scope>
</reference>
<reference key="8">
    <citation type="journal article" date="1997" name="Immunity">
        <title>Minors held by majors: the H13 minor histocompatibility locus defined as a peptide/MHC class I complex.</title>
        <authorList>
            <person name="Mendoza L.M."/>
            <person name="Paz P."/>
            <person name="Zuberi A."/>
            <person name="Christianson G.J."/>
            <person name="Roopenian D.C."/>
            <person name="Shastri N."/>
        </authorList>
    </citation>
    <scope>NUCLEOTIDE SEQUENCE OF 119-193 (ISOFORM 3)</scope>
    <scope>FUNCTION</scope>
    <source>
        <strain>BALB/cJ</strain>
        <strain>C57BL/10</strain>
        <strain>C57BL/6J</strain>
        <strain>LP/J</strain>
        <tissue>Thymic lymphoma</tissue>
    </source>
</reference>
<reference key="9">
    <citation type="journal article" date="2004" name="Genome Res.">
        <title>The status, quality, and expansion of the NIH full-length cDNA project: the Mammalian Gene Collection (MGC).</title>
        <authorList>
            <consortium name="The MGC Project Team"/>
        </authorList>
    </citation>
    <scope>NUCLEOTIDE SEQUENCE [LARGE SCALE MRNA] OF 203-378 (ISOFORMS 1/3)</scope>
    <source>
        <strain>FVB/N</strain>
        <tissue>Mammary gland</tissue>
    </source>
</reference>
<reference key="10">
    <citation type="journal article" date="2009" name="J. Cell Biol.">
        <title>The TRC8 E3 ligase ubiquitinates MHC class I molecules before dislocation from the ER.</title>
        <authorList>
            <person name="Stagg H.R."/>
            <person name="Thomas M."/>
            <person name="van den Boomen D."/>
            <person name="Wiertz E.J."/>
            <person name="Drabkin H.A."/>
            <person name="Gemmill R.M."/>
            <person name="Lehner P.J."/>
        </authorList>
    </citation>
    <scope>INTERACTION WITH RNF139</scope>
</reference>
<reference key="11">
    <citation type="journal article" date="2010" name="Cell">
        <title>A tissue-specific atlas of mouse protein phosphorylation and expression.</title>
        <authorList>
            <person name="Huttlin E.L."/>
            <person name="Jedrychowski M.P."/>
            <person name="Elias J.E."/>
            <person name="Goswami T."/>
            <person name="Rad R."/>
            <person name="Beausoleil S.A."/>
            <person name="Villen J."/>
            <person name="Haas W."/>
            <person name="Sowa M.E."/>
            <person name="Gygi S.P."/>
        </authorList>
    </citation>
    <scope>IDENTIFICATION BY MASS SPECTROMETRY [LARGE SCALE ANALYSIS]</scope>
    <source>
        <tissue>Brown adipose tissue</tissue>
        <tissue>Liver</tissue>
        <tissue>Lung</tissue>
        <tissue>Pancreas</tissue>
        <tissue>Spleen</tissue>
        <tissue>Testis</tissue>
    </source>
</reference>
<reference key="12">
    <citation type="journal article" date="2002" name="J. Immunol.">
        <title>How H13 histocompatibility peptides differing by a single methyl group and lacking conventional MHC binding anchor motifs determine self-nonself discrimination.</title>
        <authorList>
            <person name="Ostrov D.A."/>
            <person name="Roden M.M."/>
            <person name="Shi W."/>
            <person name="Palmieri E."/>
            <person name="Christianson G.J."/>
            <person name="Mendoza L."/>
            <person name="Villaflor G."/>
            <person name="Tilley D."/>
            <person name="Shastri N."/>
            <person name="Grey H."/>
            <person name="Almo S.C."/>
            <person name="Roopenian D.C."/>
            <person name="Nathenson S.G."/>
        </authorList>
    </citation>
    <scope>X-RAY CRYSTALLOGRAPHY (2.2 ANGSTROMS) OF 169-177 IN COMPLEX WITH H2-D</scope>
</reference>
<accession>Q9D8V0</accession>
<accession>A3KGS1</accession>
<accession>O19444</accession>
<accession>Q15K37</accession>
<accession>Q3TXP0</accession>
<accession>Q542R3</accession>
<accession>Q811Z6</accession>
<accession>Q8HWA9</accession>
<accession>Q8HWB5</accession>
<accession>Q9CQA4</accession>
<accession>Q9CSK9</accession>
<proteinExistence type="evidence at protein level"/>
<dbReference type="EC" id="3.4.23.-" evidence="3"/>
<dbReference type="EMBL" id="AF515662">
    <property type="protein sequence ID" value="AAN77098.1"/>
    <property type="molecule type" value="mRNA"/>
</dbReference>
<dbReference type="EMBL" id="DQ168449">
    <property type="protein sequence ID" value="ABA56162.1"/>
    <property type="molecule type" value="mRNA"/>
</dbReference>
<dbReference type="EMBL" id="AJ345032">
    <property type="protein sequence ID" value="CAC87793.1"/>
    <property type="molecule type" value="mRNA"/>
</dbReference>
<dbReference type="EMBL" id="AF483214">
    <property type="protein sequence ID" value="AAM22075.1"/>
    <property type="molecule type" value="mRNA"/>
</dbReference>
<dbReference type="EMBL" id="AF483216">
    <property type="protein sequence ID" value="AAM22077.1"/>
    <property type="molecule type" value="Genomic_DNA"/>
</dbReference>
<dbReference type="EMBL" id="AK004690">
    <property type="protein sequence ID" value="BAB23476.1"/>
    <property type="molecule type" value="mRNA"/>
</dbReference>
<dbReference type="EMBL" id="AK007664">
    <property type="protein sequence ID" value="BAB25172.1"/>
    <property type="molecule type" value="mRNA"/>
</dbReference>
<dbReference type="EMBL" id="AK012600">
    <property type="status" value="NOT_ANNOTATED_CDS"/>
    <property type="molecule type" value="mRNA"/>
</dbReference>
<dbReference type="EMBL" id="AK019877">
    <property type="protein sequence ID" value="BAB31897.1"/>
    <property type="molecule type" value="mRNA"/>
</dbReference>
<dbReference type="EMBL" id="AK028109">
    <property type="protein sequence ID" value="BAC25752.1"/>
    <property type="molecule type" value="mRNA"/>
</dbReference>
<dbReference type="EMBL" id="AK049101">
    <property type="protein sequence ID" value="BAC33543.1"/>
    <property type="molecule type" value="mRNA"/>
</dbReference>
<dbReference type="EMBL" id="AK050664">
    <property type="protein sequence ID" value="BAC34369.1"/>
    <property type="molecule type" value="mRNA"/>
</dbReference>
<dbReference type="EMBL" id="AK080966">
    <property type="protein sequence ID" value="BAC38098.1"/>
    <property type="molecule type" value="mRNA"/>
</dbReference>
<dbReference type="EMBL" id="AK159176">
    <property type="protein sequence ID" value="BAE34875.1"/>
    <property type="molecule type" value="mRNA"/>
</dbReference>
<dbReference type="EMBL" id="AK169922">
    <property type="protein sequence ID" value="BAE41461.1"/>
    <property type="molecule type" value="mRNA"/>
</dbReference>
<dbReference type="EMBL" id="AL845162">
    <property type="status" value="NOT_ANNOTATED_CDS"/>
    <property type="molecule type" value="Genomic_DNA"/>
</dbReference>
<dbReference type="EMBL" id="CH466551">
    <property type="protein sequence ID" value="EDL05980.1"/>
    <property type="molecule type" value="Genomic_DNA"/>
</dbReference>
<dbReference type="EMBL" id="CH466551">
    <property type="protein sequence ID" value="EDL05981.1"/>
    <property type="molecule type" value="Genomic_DNA"/>
</dbReference>
<dbReference type="EMBL" id="AF017785">
    <property type="protein sequence ID" value="AAB81863.1"/>
    <property type="molecule type" value="mRNA"/>
</dbReference>
<dbReference type="EMBL" id="BC034217">
    <property type="status" value="NOT_ANNOTATED_CDS"/>
    <property type="molecule type" value="mRNA"/>
</dbReference>
<dbReference type="CCDS" id="CCDS16896.1">
    <molecule id="Q9D8V0-1"/>
</dbReference>
<dbReference type="CCDS" id="CCDS50752.1">
    <molecule id="Q9D8V0-4"/>
</dbReference>
<dbReference type="RefSeq" id="NP_001153023.1">
    <molecule id="Q9D8V0-4"/>
    <property type="nucleotide sequence ID" value="NM_001159551.1"/>
</dbReference>
<dbReference type="RefSeq" id="NP_001153025.1">
    <molecule id="Q9D8V0-2"/>
    <property type="nucleotide sequence ID" value="NM_001159553.1"/>
</dbReference>
<dbReference type="RefSeq" id="NP_034506.1">
    <molecule id="Q9D8V0-1"/>
    <property type="nucleotide sequence ID" value="NM_010376.4"/>
</dbReference>
<dbReference type="PDB" id="1INQ">
    <property type="method" value="X-ray"/>
    <property type="resolution" value="2.20 A"/>
    <property type="chains" value="C=169-177"/>
</dbReference>
<dbReference type="PDB" id="1JUF">
    <property type="method" value="X-ray"/>
    <property type="resolution" value="2.00 A"/>
    <property type="chains" value="C=169-177"/>
</dbReference>
<dbReference type="PDBsum" id="1INQ"/>
<dbReference type="PDBsum" id="1JUF"/>
<dbReference type="SMR" id="Q9D8V0"/>
<dbReference type="BioGRID" id="200142">
    <property type="interactions" value="6"/>
</dbReference>
<dbReference type="FunCoup" id="Q9D8V0">
    <property type="interactions" value="2710"/>
</dbReference>
<dbReference type="STRING" id="10090.ENSMUSP00000086460"/>
<dbReference type="MEROPS" id="A22.003"/>
<dbReference type="GlyCosmos" id="Q9D8V0">
    <property type="glycosylation" value="2 sites, No reported glycans"/>
</dbReference>
<dbReference type="GlyGen" id="Q9D8V0">
    <property type="glycosylation" value="2 sites"/>
</dbReference>
<dbReference type="iPTMnet" id="Q9D8V0"/>
<dbReference type="PhosphoSitePlus" id="Q9D8V0"/>
<dbReference type="SwissPalm" id="Q9D8V0"/>
<dbReference type="jPOST" id="Q9D8V0"/>
<dbReference type="PaxDb" id="10090-ENSMUSP00000086460"/>
<dbReference type="PeptideAtlas" id="Q9D8V0"/>
<dbReference type="ProteomicsDB" id="269569">
    <molecule id="Q9D8V0-1"/>
</dbReference>
<dbReference type="ProteomicsDB" id="269570">
    <molecule id="Q9D8V0-2"/>
</dbReference>
<dbReference type="ProteomicsDB" id="269571">
    <molecule id="Q9D8V0-3"/>
</dbReference>
<dbReference type="ProteomicsDB" id="269572">
    <molecule id="Q9D8V0-4"/>
</dbReference>
<dbReference type="Pumba" id="Q9D8V0"/>
<dbReference type="Antibodypedia" id="25181">
    <property type="antibodies" value="132 antibodies from 21 providers"/>
</dbReference>
<dbReference type="DNASU" id="14950"/>
<dbReference type="Ensembl" id="ENSMUST00000089059.9">
    <molecule id="Q9D8V0-4"/>
    <property type="protein sequence ID" value="ENSMUSP00000086460.3"/>
    <property type="gene ID" value="ENSMUSG00000019188.17"/>
</dbReference>
<dbReference type="Ensembl" id="ENSMUST00000125366.8">
    <molecule id="Q9D8V0-1"/>
    <property type="protein sequence ID" value="ENSMUSP00000120068.2"/>
    <property type="gene ID" value="ENSMUSG00000019188.17"/>
</dbReference>
<dbReference type="GeneID" id="14950"/>
<dbReference type="KEGG" id="mmu:14950"/>
<dbReference type="UCSC" id="uc008nfz.2">
    <molecule id="Q9D8V0-2"/>
    <property type="organism name" value="mouse"/>
</dbReference>
<dbReference type="UCSC" id="uc008ngb.2">
    <molecule id="Q9D8V0-1"/>
    <property type="organism name" value="mouse"/>
</dbReference>
<dbReference type="UCSC" id="uc008ngc.2">
    <molecule id="Q9D8V0-4"/>
    <property type="organism name" value="mouse"/>
</dbReference>
<dbReference type="AGR" id="MGI:95886"/>
<dbReference type="CTD" id="14950"/>
<dbReference type="MGI" id="MGI:95886">
    <property type="gene designation" value="H13"/>
</dbReference>
<dbReference type="VEuPathDB" id="HostDB:ENSMUSG00000019188"/>
<dbReference type="eggNOG" id="KOG2443">
    <property type="taxonomic scope" value="Eukaryota"/>
</dbReference>
<dbReference type="GeneTree" id="ENSGT00940000156478"/>
<dbReference type="HOGENOM" id="CLU_023799_0_0_1"/>
<dbReference type="InParanoid" id="Q9D8V0"/>
<dbReference type="OMA" id="FLYDIWW"/>
<dbReference type="OrthoDB" id="29661at2759"/>
<dbReference type="PhylomeDB" id="Q9D8V0"/>
<dbReference type="TreeFam" id="TF105854"/>
<dbReference type="BRENDA" id="3.4.23.B24">
    <property type="organism ID" value="3474"/>
</dbReference>
<dbReference type="Reactome" id="R-MMU-9707587">
    <property type="pathway name" value="Regulation of HMOX1 expression and activity"/>
</dbReference>
<dbReference type="BioGRID-ORCS" id="14950">
    <property type="hits" value="10 hits in 81 CRISPR screens"/>
</dbReference>
<dbReference type="ChiTaRS" id="H13">
    <property type="organism name" value="mouse"/>
</dbReference>
<dbReference type="EvolutionaryTrace" id="Q9D8V0"/>
<dbReference type="PRO" id="PR:Q9D8V0"/>
<dbReference type="Proteomes" id="UP000000589">
    <property type="component" value="Chromosome 2"/>
</dbReference>
<dbReference type="RNAct" id="Q9D8V0">
    <property type="molecule type" value="protein"/>
</dbReference>
<dbReference type="Bgee" id="ENSMUSG00000019188">
    <property type="expression patterns" value="Expressed in seminal vesicle and 279 other cell types or tissues"/>
</dbReference>
<dbReference type="ExpressionAtlas" id="Q9D8V0">
    <property type="expression patterns" value="baseline and differential"/>
</dbReference>
<dbReference type="GO" id="GO:0009986">
    <property type="term" value="C:cell surface"/>
    <property type="evidence" value="ECO:0000314"/>
    <property type="project" value="UniProtKB"/>
</dbReference>
<dbReference type="GO" id="GO:0098554">
    <property type="term" value="C:cytoplasmic side of endoplasmic reticulum membrane"/>
    <property type="evidence" value="ECO:0000250"/>
    <property type="project" value="UniProtKB"/>
</dbReference>
<dbReference type="GO" id="GO:0036513">
    <property type="term" value="C:Derlin-1 retrotranslocation complex"/>
    <property type="evidence" value="ECO:0007669"/>
    <property type="project" value="Ensembl"/>
</dbReference>
<dbReference type="GO" id="GO:0005783">
    <property type="term" value="C:endoplasmic reticulum"/>
    <property type="evidence" value="ECO:0000314"/>
    <property type="project" value="UniProtKB"/>
</dbReference>
<dbReference type="GO" id="GO:0005789">
    <property type="term" value="C:endoplasmic reticulum membrane"/>
    <property type="evidence" value="ECO:0000314"/>
    <property type="project" value="MGI"/>
</dbReference>
<dbReference type="GO" id="GO:0098553">
    <property type="term" value="C:lumenal side of endoplasmic reticulum membrane"/>
    <property type="evidence" value="ECO:0000250"/>
    <property type="project" value="UniProtKB"/>
</dbReference>
<dbReference type="GO" id="GO:0005886">
    <property type="term" value="C:plasma membrane"/>
    <property type="evidence" value="ECO:0007669"/>
    <property type="project" value="UniProtKB-SubCell"/>
</dbReference>
<dbReference type="GO" id="GO:0005791">
    <property type="term" value="C:rough endoplasmic reticulum"/>
    <property type="evidence" value="ECO:0000250"/>
    <property type="project" value="UniProtKB"/>
</dbReference>
<dbReference type="GO" id="GO:0042500">
    <property type="term" value="F:aspartic endopeptidase activity, intramembrane cleaving"/>
    <property type="evidence" value="ECO:0000250"/>
    <property type="project" value="UniProtKB"/>
</dbReference>
<dbReference type="GO" id="GO:0008233">
    <property type="term" value="F:peptidase activity"/>
    <property type="evidence" value="ECO:0000250"/>
    <property type="project" value="UniProtKB"/>
</dbReference>
<dbReference type="GO" id="GO:0042803">
    <property type="term" value="F:protein homodimerization activity"/>
    <property type="evidence" value="ECO:0000250"/>
    <property type="project" value="UniProtKB"/>
</dbReference>
<dbReference type="GO" id="GO:0031625">
    <property type="term" value="F:ubiquitin protein ligase binding"/>
    <property type="evidence" value="ECO:0007669"/>
    <property type="project" value="Ensembl"/>
</dbReference>
<dbReference type="GO" id="GO:0001701">
    <property type="term" value="P:in utero embryonic development"/>
    <property type="evidence" value="ECO:0000315"/>
    <property type="project" value="MGI"/>
</dbReference>
<dbReference type="GO" id="GO:0033619">
    <property type="term" value="P:membrane protein proteolysis"/>
    <property type="evidence" value="ECO:0000250"/>
    <property type="project" value="UniProtKB"/>
</dbReference>
<dbReference type="GO" id="GO:1904211">
    <property type="term" value="P:membrane protein proteolysis involved in retrograde protein transport, ER to cytosol"/>
    <property type="evidence" value="ECO:0007669"/>
    <property type="project" value="Ensembl"/>
</dbReference>
<dbReference type="InterPro" id="IPR007369">
    <property type="entry name" value="Peptidase_A22B_SPP"/>
</dbReference>
<dbReference type="InterPro" id="IPR006639">
    <property type="entry name" value="Preselin/SPP"/>
</dbReference>
<dbReference type="PANTHER" id="PTHR12174:SF23">
    <property type="entry name" value="MINOR HISTOCOMPATIBILITY ANTIGEN H13"/>
    <property type="match status" value="1"/>
</dbReference>
<dbReference type="PANTHER" id="PTHR12174">
    <property type="entry name" value="SIGNAL PEPTIDE PEPTIDASE"/>
    <property type="match status" value="1"/>
</dbReference>
<dbReference type="Pfam" id="PF04258">
    <property type="entry name" value="Peptidase_A22B"/>
    <property type="match status" value="1"/>
</dbReference>
<dbReference type="SMART" id="SM00730">
    <property type="entry name" value="PSN"/>
    <property type="match status" value="1"/>
</dbReference>
<evidence type="ECO:0000250" key="1">
    <source>
        <dbReference type="UniProtKB" id="P49768"/>
    </source>
</evidence>
<evidence type="ECO:0000250" key="2">
    <source>
        <dbReference type="UniProtKB" id="P49810"/>
    </source>
</evidence>
<evidence type="ECO:0000250" key="3">
    <source>
        <dbReference type="UniProtKB" id="Q8TCT9"/>
    </source>
</evidence>
<evidence type="ECO:0000255" key="4"/>
<evidence type="ECO:0000256" key="5">
    <source>
        <dbReference type="SAM" id="MobiDB-lite"/>
    </source>
</evidence>
<evidence type="ECO:0000269" key="6">
    <source>
    </source>
</evidence>
<evidence type="ECO:0000269" key="7">
    <source>
    </source>
</evidence>
<evidence type="ECO:0000269" key="8">
    <source>
    </source>
</evidence>
<evidence type="ECO:0000269" key="9">
    <source>
    </source>
</evidence>
<evidence type="ECO:0000303" key="10">
    <source>
    </source>
</evidence>
<evidence type="ECO:0000303" key="11">
    <source>
    </source>
</evidence>
<evidence type="ECO:0000303" key="12">
    <source>
    </source>
</evidence>
<evidence type="ECO:0000305" key="13"/>
<evidence type="ECO:0000312" key="14">
    <source>
        <dbReference type="MGI" id="MGI:95886"/>
    </source>
</evidence>